<evidence type="ECO:0000255" key="1">
    <source>
        <dbReference type="HAMAP-Rule" id="MF_00537"/>
    </source>
</evidence>
<evidence type="ECO:0000256" key="2">
    <source>
        <dbReference type="SAM" id="MobiDB-lite"/>
    </source>
</evidence>
<evidence type="ECO:0000305" key="3"/>
<feature type="chain" id="PRO_1000128439" description="Small ribosomal subunit protein uS14">
    <location>
        <begin position="1"/>
        <end position="101"/>
    </location>
</feature>
<feature type="region of interest" description="Disordered" evidence="2">
    <location>
        <begin position="51"/>
        <end position="70"/>
    </location>
</feature>
<feature type="compositionally biased region" description="Polar residues" evidence="2">
    <location>
        <begin position="52"/>
        <end position="68"/>
    </location>
</feature>
<proteinExistence type="inferred from homology"/>
<keyword id="KW-0687">Ribonucleoprotein</keyword>
<keyword id="KW-0689">Ribosomal protein</keyword>
<keyword id="KW-0694">RNA-binding</keyword>
<keyword id="KW-0699">rRNA-binding</keyword>
<gene>
    <name evidence="1" type="primary">rpsN</name>
    <name type="ordered locus">MS2035</name>
</gene>
<organism>
    <name type="scientific">Mannheimia succiniciproducens (strain KCTC 0769BP / MBEL55E)</name>
    <dbReference type="NCBI Taxonomy" id="221988"/>
    <lineage>
        <taxon>Bacteria</taxon>
        <taxon>Pseudomonadati</taxon>
        <taxon>Pseudomonadota</taxon>
        <taxon>Gammaproteobacteria</taxon>
        <taxon>Pasteurellales</taxon>
        <taxon>Pasteurellaceae</taxon>
        <taxon>Basfia</taxon>
    </lineage>
</organism>
<protein>
    <recommendedName>
        <fullName evidence="1">Small ribosomal subunit protein uS14</fullName>
    </recommendedName>
    <alternativeName>
        <fullName evidence="3">30S ribosomal protein S14</fullName>
    </alternativeName>
</protein>
<name>RS14_MANSM</name>
<dbReference type="EMBL" id="AE016827">
    <property type="protein sequence ID" value="AAU38642.1"/>
    <property type="molecule type" value="Genomic_DNA"/>
</dbReference>
<dbReference type="RefSeq" id="WP_011201193.1">
    <property type="nucleotide sequence ID" value="NC_006300.1"/>
</dbReference>
<dbReference type="SMR" id="Q65QW8"/>
<dbReference type="STRING" id="221988.MS2035"/>
<dbReference type="KEGG" id="msu:MS2035"/>
<dbReference type="eggNOG" id="COG0199">
    <property type="taxonomic scope" value="Bacteria"/>
</dbReference>
<dbReference type="HOGENOM" id="CLU_139869_0_1_6"/>
<dbReference type="OrthoDB" id="9810484at2"/>
<dbReference type="Proteomes" id="UP000000607">
    <property type="component" value="Chromosome"/>
</dbReference>
<dbReference type="GO" id="GO:0005737">
    <property type="term" value="C:cytoplasm"/>
    <property type="evidence" value="ECO:0007669"/>
    <property type="project" value="UniProtKB-ARBA"/>
</dbReference>
<dbReference type="GO" id="GO:0015935">
    <property type="term" value="C:small ribosomal subunit"/>
    <property type="evidence" value="ECO:0007669"/>
    <property type="project" value="TreeGrafter"/>
</dbReference>
<dbReference type="GO" id="GO:0019843">
    <property type="term" value="F:rRNA binding"/>
    <property type="evidence" value="ECO:0007669"/>
    <property type="project" value="UniProtKB-UniRule"/>
</dbReference>
<dbReference type="GO" id="GO:0003735">
    <property type="term" value="F:structural constituent of ribosome"/>
    <property type="evidence" value="ECO:0007669"/>
    <property type="project" value="InterPro"/>
</dbReference>
<dbReference type="GO" id="GO:0006412">
    <property type="term" value="P:translation"/>
    <property type="evidence" value="ECO:0007669"/>
    <property type="project" value="UniProtKB-UniRule"/>
</dbReference>
<dbReference type="FunFam" id="1.10.287.1480:FF:000001">
    <property type="entry name" value="30S ribosomal protein S14"/>
    <property type="match status" value="1"/>
</dbReference>
<dbReference type="Gene3D" id="1.10.287.1480">
    <property type="match status" value="1"/>
</dbReference>
<dbReference type="HAMAP" id="MF_00537">
    <property type="entry name" value="Ribosomal_uS14_1"/>
    <property type="match status" value="1"/>
</dbReference>
<dbReference type="InterPro" id="IPR001209">
    <property type="entry name" value="Ribosomal_uS14"/>
</dbReference>
<dbReference type="InterPro" id="IPR023036">
    <property type="entry name" value="Ribosomal_uS14_bac/plastid"/>
</dbReference>
<dbReference type="InterPro" id="IPR018271">
    <property type="entry name" value="Ribosomal_uS14_CS"/>
</dbReference>
<dbReference type="NCBIfam" id="NF006477">
    <property type="entry name" value="PRK08881.1"/>
    <property type="match status" value="1"/>
</dbReference>
<dbReference type="PANTHER" id="PTHR19836">
    <property type="entry name" value="30S RIBOSOMAL PROTEIN S14"/>
    <property type="match status" value="1"/>
</dbReference>
<dbReference type="PANTHER" id="PTHR19836:SF19">
    <property type="entry name" value="SMALL RIBOSOMAL SUBUNIT PROTEIN US14M"/>
    <property type="match status" value="1"/>
</dbReference>
<dbReference type="Pfam" id="PF00253">
    <property type="entry name" value="Ribosomal_S14"/>
    <property type="match status" value="1"/>
</dbReference>
<dbReference type="SUPFAM" id="SSF57716">
    <property type="entry name" value="Glucocorticoid receptor-like (DNA-binding domain)"/>
    <property type="match status" value="1"/>
</dbReference>
<dbReference type="PROSITE" id="PS00527">
    <property type="entry name" value="RIBOSOMAL_S14"/>
    <property type="match status" value="1"/>
</dbReference>
<reference key="1">
    <citation type="journal article" date="2004" name="Nat. Biotechnol.">
        <title>The genome sequence of the capnophilic rumen bacterium Mannheimia succiniciproducens.</title>
        <authorList>
            <person name="Hong S.H."/>
            <person name="Kim J.S."/>
            <person name="Lee S.Y."/>
            <person name="In Y.H."/>
            <person name="Choi S.S."/>
            <person name="Rih J.-K."/>
            <person name="Kim C.H."/>
            <person name="Jeong H."/>
            <person name="Hur C.G."/>
            <person name="Kim J.J."/>
        </authorList>
    </citation>
    <scope>NUCLEOTIDE SEQUENCE [LARGE SCALE GENOMIC DNA]</scope>
    <source>
        <strain>KCTC 0769BP / MBEL55E</strain>
    </source>
</reference>
<comment type="function">
    <text evidence="1">Binds 16S rRNA, required for the assembly of 30S particles and may also be responsible for determining the conformation of the 16S rRNA at the A site.</text>
</comment>
<comment type="subunit">
    <text evidence="1">Part of the 30S ribosomal subunit. Contacts proteins S3 and S10.</text>
</comment>
<comment type="similarity">
    <text evidence="1">Belongs to the universal ribosomal protein uS14 family.</text>
</comment>
<sequence length="101" mass="11665">MAKQSMKARDVKRVKLAEKFYAQRVELKRIISDVNSSDEERWDAVLKLQTLPRDSSPSRQRNRCSQTGRPHGVLRKFGLSRIKVREAAMRGEIPGLKKASW</sequence>
<accession>Q65QW8</accession>